<keyword id="KW-1185">Reference proteome</keyword>
<feature type="chain" id="PRO_1000061640" description="UPF0246 protein Swit_4565">
    <location>
        <begin position="1"/>
        <end position="253"/>
    </location>
</feature>
<comment type="similarity">
    <text evidence="1">Belongs to the UPF0246 family.</text>
</comment>
<protein>
    <recommendedName>
        <fullName evidence="1">UPF0246 protein Swit_4565</fullName>
    </recommendedName>
</protein>
<evidence type="ECO:0000255" key="1">
    <source>
        <dbReference type="HAMAP-Rule" id="MF_00652"/>
    </source>
</evidence>
<gene>
    <name type="ordered locus">Swit_4565</name>
</gene>
<sequence>MLLLLSPAKSLDYTSPLPPLEATAPRFAEEALATAQAAAKLSARKLAGLMGISDKLAKLNAGRYADFAGQEERPALYAFSGDVYVGFEAKTLDEPAIGFAQDHVRILSGLYGLLRPLDLIRPYRLEMGTRWAPGRKKNLYQLWGSKISDALAADLLGEGSDVIVNCASKEYWHAVDQAPPKGIRIITMDFRELAPQGLIFNSFGAKRARGMMARWMCEHRITDPEGLKGFDSDGYAYSAEGSDDSTWRFVKTR</sequence>
<organism>
    <name type="scientific">Rhizorhabdus wittichii (strain DSM 6014 / CCUG 31198 / JCM 15750 / NBRC 105917 / EY 4224 / RW1)</name>
    <name type="common">Sphingomonas wittichii</name>
    <dbReference type="NCBI Taxonomy" id="392499"/>
    <lineage>
        <taxon>Bacteria</taxon>
        <taxon>Pseudomonadati</taxon>
        <taxon>Pseudomonadota</taxon>
        <taxon>Alphaproteobacteria</taxon>
        <taxon>Sphingomonadales</taxon>
        <taxon>Sphingomonadaceae</taxon>
        <taxon>Rhizorhabdus</taxon>
    </lineage>
</organism>
<accession>A5VF37</accession>
<dbReference type="EMBL" id="CP000699">
    <property type="protein sequence ID" value="ABQ70903.1"/>
    <property type="molecule type" value="Genomic_DNA"/>
</dbReference>
<dbReference type="SMR" id="A5VF37"/>
<dbReference type="STRING" id="392499.Swit_4565"/>
<dbReference type="PaxDb" id="392499-Swit_4565"/>
<dbReference type="KEGG" id="swi:Swit_4565"/>
<dbReference type="eggNOG" id="COG3022">
    <property type="taxonomic scope" value="Bacteria"/>
</dbReference>
<dbReference type="HOGENOM" id="CLU_061989_0_0_5"/>
<dbReference type="OrthoDB" id="9777133at2"/>
<dbReference type="Proteomes" id="UP000001989">
    <property type="component" value="Chromosome"/>
</dbReference>
<dbReference type="GO" id="GO:0005829">
    <property type="term" value="C:cytosol"/>
    <property type="evidence" value="ECO:0007669"/>
    <property type="project" value="TreeGrafter"/>
</dbReference>
<dbReference type="GO" id="GO:0033194">
    <property type="term" value="P:response to hydroperoxide"/>
    <property type="evidence" value="ECO:0007669"/>
    <property type="project" value="TreeGrafter"/>
</dbReference>
<dbReference type="HAMAP" id="MF_00652">
    <property type="entry name" value="UPF0246"/>
    <property type="match status" value="1"/>
</dbReference>
<dbReference type="InterPro" id="IPR005583">
    <property type="entry name" value="YaaA"/>
</dbReference>
<dbReference type="NCBIfam" id="NF002542">
    <property type="entry name" value="PRK02101.1-3"/>
    <property type="match status" value="1"/>
</dbReference>
<dbReference type="PANTHER" id="PTHR30283:SF4">
    <property type="entry name" value="PEROXIDE STRESS RESISTANCE PROTEIN YAAA"/>
    <property type="match status" value="1"/>
</dbReference>
<dbReference type="PANTHER" id="PTHR30283">
    <property type="entry name" value="PEROXIDE STRESS RESPONSE PROTEIN YAAA"/>
    <property type="match status" value="1"/>
</dbReference>
<dbReference type="Pfam" id="PF03883">
    <property type="entry name" value="H2O2_YaaD"/>
    <property type="match status" value="1"/>
</dbReference>
<reference key="1">
    <citation type="journal article" date="2010" name="J. Bacteriol.">
        <title>Genome sequence of the dioxin-mineralizing bacterium Sphingomonas wittichii RW1.</title>
        <authorList>
            <person name="Miller T.R."/>
            <person name="Delcher A.L."/>
            <person name="Salzberg S.L."/>
            <person name="Saunders E."/>
            <person name="Detter J.C."/>
            <person name="Halden R.U."/>
        </authorList>
    </citation>
    <scope>NUCLEOTIDE SEQUENCE [LARGE SCALE GENOMIC DNA]</scope>
    <source>
        <strain>DSM 6014 / CCUG 31198 / JCM 15750 / NBRC 105917 / EY 4224 / RW1</strain>
    </source>
</reference>
<proteinExistence type="inferred from homology"/>
<name>Y4565_RHIWR</name>